<gene>
    <name evidence="1" type="primary">rpmB</name>
    <name type="ordered locus">Bcer98_2510</name>
</gene>
<evidence type="ECO:0000255" key="1">
    <source>
        <dbReference type="HAMAP-Rule" id="MF_00373"/>
    </source>
</evidence>
<evidence type="ECO:0000256" key="2">
    <source>
        <dbReference type="SAM" id="MobiDB-lite"/>
    </source>
</evidence>
<evidence type="ECO:0000305" key="3"/>
<protein>
    <recommendedName>
        <fullName evidence="1">Large ribosomal subunit protein bL28</fullName>
    </recommendedName>
    <alternativeName>
        <fullName evidence="3">50S ribosomal protein L28</fullName>
    </alternativeName>
</protein>
<reference key="1">
    <citation type="journal article" date="2008" name="Chem. Biol. Interact.">
        <title>Extending the Bacillus cereus group genomics to putative food-borne pathogens of different toxicity.</title>
        <authorList>
            <person name="Lapidus A."/>
            <person name="Goltsman E."/>
            <person name="Auger S."/>
            <person name="Galleron N."/>
            <person name="Segurens B."/>
            <person name="Dossat C."/>
            <person name="Land M.L."/>
            <person name="Broussolle V."/>
            <person name="Brillard J."/>
            <person name="Guinebretiere M.-H."/>
            <person name="Sanchis V."/>
            <person name="Nguen-the C."/>
            <person name="Lereclus D."/>
            <person name="Richardson P."/>
            <person name="Wincker P."/>
            <person name="Weissenbach J."/>
            <person name="Ehrlich S.D."/>
            <person name="Sorokin A."/>
        </authorList>
    </citation>
    <scope>NUCLEOTIDE SEQUENCE [LARGE SCALE GENOMIC DNA]</scope>
    <source>
        <strain>DSM 22905 / CIP 110041 / 391-98 / NVH 391-98</strain>
    </source>
</reference>
<organism>
    <name type="scientific">Bacillus cytotoxicus (strain DSM 22905 / CIP 110041 / 391-98 / NVH 391-98)</name>
    <dbReference type="NCBI Taxonomy" id="315749"/>
    <lineage>
        <taxon>Bacteria</taxon>
        <taxon>Bacillati</taxon>
        <taxon>Bacillota</taxon>
        <taxon>Bacilli</taxon>
        <taxon>Bacillales</taxon>
        <taxon>Bacillaceae</taxon>
        <taxon>Bacillus</taxon>
        <taxon>Bacillus cereus group</taxon>
    </lineage>
</organism>
<accession>A7GRI8</accession>
<dbReference type="EMBL" id="CP000764">
    <property type="protein sequence ID" value="ABS22746.1"/>
    <property type="molecule type" value="Genomic_DNA"/>
</dbReference>
<dbReference type="RefSeq" id="WP_012094952.1">
    <property type="nucleotide sequence ID" value="NC_009674.1"/>
</dbReference>
<dbReference type="SMR" id="A7GRI8"/>
<dbReference type="STRING" id="315749.Bcer98_2510"/>
<dbReference type="GeneID" id="33897765"/>
<dbReference type="KEGG" id="bcy:Bcer98_2510"/>
<dbReference type="eggNOG" id="COG0227">
    <property type="taxonomic scope" value="Bacteria"/>
</dbReference>
<dbReference type="HOGENOM" id="CLU_064548_7_1_9"/>
<dbReference type="OrthoDB" id="9805609at2"/>
<dbReference type="Proteomes" id="UP000002300">
    <property type="component" value="Chromosome"/>
</dbReference>
<dbReference type="GO" id="GO:1990904">
    <property type="term" value="C:ribonucleoprotein complex"/>
    <property type="evidence" value="ECO:0007669"/>
    <property type="project" value="UniProtKB-KW"/>
</dbReference>
<dbReference type="GO" id="GO:0005840">
    <property type="term" value="C:ribosome"/>
    <property type="evidence" value="ECO:0007669"/>
    <property type="project" value="UniProtKB-KW"/>
</dbReference>
<dbReference type="GO" id="GO:0003735">
    <property type="term" value="F:structural constituent of ribosome"/>
    <property type="evidence" value="ECO:0007669"/>
    <property type="project" value="InterPro"/>
</dbReference>
<dbReference type="GO" id="GO:0006412">
    <property type="term" value="P:translation"/>
    <property type="evidence" value="ECO:0007669"/>
    <property type="project" value="UniProtKB-UniRule"/>
</dbReference>
<dbReference type="Gene3D" id="2.30.170.40">
    <property type="entry name" value="Ribosomal protein L28/L24"/>
    <property type="match status" value="1"/>
</dbReference>
<dbReference type="HAMAP" id="MF_00373">
    <property type="entry name" value="Ribosomal_bL28"/>
    <property type="match status" value="1"/>
</dbReference>
<dbReference type="InterPro" id="IPR050096">
    <property type="entry name" value="Bacterial_rp_bL28"/>
</dbReference>
<dbReference type="InterPro" id="IPR026569">
    <property type="entry name" value="Ribosomal_bL28"/>
</dbReference>
<dbReference type="InterPro" id="IPR034704">
    <property type="entry name" value="Ribosomal_bL28/bL31-like_sf"/>
</dbReference>
<dbReference type="InterPro" id="IPR001383">
    <property type="entry name" value="Ribosomal_bL28_bact-type"/>
</dbReference>
<dbReference type="InterPro" id="IPR037147">
    <property type="entry name" value="Ribosomal_bL28_sf"/>
</dbReference>
<dbReference type="NCBIfam" id="TIGR00009">
    <property type="entry name" value="L28"/>
    <property type="match status" value="1"/>
</dbReference>
<dbReference type="PANTHER" id="PTHR39080">
    <property type="entry name" value="50S RIBOSOMAL PROTEIN L28"/>
    <property type="match status" value="1"/>
</dbReference>
<dbReference type="PANTHER" id="PTHR39080:SF1">
    <property type="entry name" value="LARGE RIBOSOMAL SUBUNIT PROTEIN BL28A"/>
    <property type="match status" value="1"/>
</dbReference>
<dbReference type="Pfam" id="PF00830">
    <property type="entry name" value="Ribosomal_L28"/>
    <property type="match status" value="1"/>
</dbReference>
<dbReference type="SUPFAM" id="SSF143800">
    <property type="entry name" value="L28p-like"/>
    <property type="match status" value="1"/>
</dbReference>
<feature type="chain" id="PRO_1000079838" description="Large ribosomal subunit protein bL28">
    <location>
        <begin position="1"/>
        <end position="62"/>
    </location>
</feature>
<feature type="region of interest" description="Disordered" evidence="2">
    <location>
        <begin position="1"/>
        <end position="28"/>
    </location>
</feature>
<keyword id="KW-0687">Ribonucleoprotein</keyword>
<keyword id="KW-0689">Ribosomal protein</keyword>
<name>RL28_BACCN</name>
<comment type="similarity">
    <text evidence="1">Belongs to the bacterial ribosomal protein bL28 family.</text>
</comment>
<sequence>MARVCAITGRKARSGNSRSHAMNATKRKWGANLQKVRVRINGKVQRVYVSARALKSGKIERV</sequence>
<proteinExistence type="inferred from homology"/>